<protein>
    <recommendedName>
        <fullName evidence="1">Large ribosomal subunit protein uL1</fullName>
    </recommendedName>
    <alternativeName>
        <fullName evidence="2">50S ribosomal protein L1</fullName>
    </alternativeName>
</protein>
<feature type="chain" id="PRO_1000141436" description="Large ribosomal subunit protein uL1">
    <location>
        <begin position="1"/>
        <end position="231"/>
    </location>
</feature>
<proteinExistence type="inferred from homology"/>
<sequence>MAKVSKRLKVLRSSVEANKLYAIDEAIALVKKAATAKFDESVDVSFNLGVDSRKSDQVIRGSVVLPKGTGKTTRVAVFTQGVNAEAAKEAGADVVGFEDLAAEIKAGNLNFDVVIASPDAMRIVGQLGTILGPRGLMPNPKIGTVTPNVAEAVKNAKAGQVQYRTDKAGIVHATIGRASFAEADLKENFDALLDAIVKAKPAAAKGQYLKKVAVSSTMGLGVRVDTSSVNN</sequence>
<keyword id="KW-0678">Repressor</keyword>
<keyword id="KW-0687">Ribonucleoprotein</keyword>
<keyword id="KW-0689">Ribosomal protein</keyword>
<keyword id="KW-0694">RNA-binding</keyword>
<keyword id="KW-0699">rRNA-binding</keyword>
<keyword id="KW-0810">Translation regulation</keyword>
<keyword id="KW-0820">tRNA-binding</keyword>
<gene>
    <name evidence="1" type="primary">rplA</name>
    <name type="ordered locus">NGK_2417</name>
</gene>
<organism>
    <name type="scientific">Neisseria gonorrhoeae (strain NCCP11945)</name>
    <dbReference type="NCBI Taxonomy" id="521006"/>
    <lineage>
        <taxon>Bacteria</taxon>
        <taxon>Pseudomonadati</taxon>
        <taxon>Pseudomonadota</taxon>
        <taxon>Betaproteobacteria</taxon>
        <taxon>Neisseriales</taxon>
        <taxon>Neisseriaceae</taxon>
        <taxon>Neisseria</taxon>
    </lineage>
</organism>
<evidence type="ECO:0000255" key="1">
    <source>
        <dbReference type="HAMAP-Rule" id="MF_01318"/>
    </source>
</evidence>
<evidence type="ECO:0000305" key="2"/>
<name>RL1_NEIG2</name>
<reference key="1">
    <citation type="journal article" date="2008" name="J. Bacteriol.">
        <title>Complete genome sequence of Neisseria gonorrhoeae NCCP11945.</title>
        <authorList>
            <person name="Chung G.T."/>
            <person name="Yoo J.S."/>
            <person name="Oh H.B."/>
            <person name="Lee Y.S."/>
            <person name="Cha S.H."/>
            <person name="Kim S.J."/>
            <person name="Yoo C.K."/>
        </authorList>
    </citation>
    <scope>NUCLEOTIDE SEQUENCE [LARGE SCALE GENOMIC DNA]</scope>
    <source>
        <strain>NCCP11945</strain>
    </source>
</reference>
<accession>B4RQV9</accession>
<comment type="function">
    <text evidence="1">Binds directly to 23S rRNA. The L1 stalk is quite mobile in the ribosome, and is involved in E site tRNA release.</text>
</comment>
<comment type="function">
    <text evidence="1">Protein L1 is also a translational repressor protein, it controls the translation of the L11 operon by binding to its mRNA.</text>
</comment>
<comment type="subunit">
    <text evidence="1">Part of the 50S ribosomal subunit.</text>
</comment>
<comment type="similarity">
    <text evidence="1">Belongs to the universal ribosomal protein uL1 family.</text>
</comment>
<dbReference type="EMBL" id="CP001050">
    <property type="protein sequence ID" value="ACF31019.1"/>
    <property type="molecule type" value="Genomic_DNA"/>
</dbReference>
<dbReference type="RefSeq" id="WP_003690110.1">
    <property type="nucleotide sequence ID" value="NC_011035.1"/>
</dbReference>
<dbReference type="SMR" id="B4RQV9"/>
<dbReference type="GeneID" id="66754277"/>
<dbReference type="KEGG" id="ngk:NGK_2417"/>
<dbReference type="HOGENOM" id="CLU_062853_0_0_4"/>
<dbReference type="Proteomes" id="UP000002564">
    <property type="component" value="Chromosome"/>
</dbReference>
<dbReference type="GO" id="GO:0022625">
    <property type="term" value="C:cytosolic large ribosomal subunit"/>
    <property type="evidence" value="ECO:0007669"/>
    <property type="project" value="TreeGrafter"/>
</dbReference>
<dbReference type="GO" id="GO:0019843">
    <property type="term" value="F:rRNA binding"/>
    <property type="evidence" value="ECO:0007669"/>
    <property type="project" value="UniProtKB-UniRule"/>
</dbReference>
<dbReference type="GO" id="GO:0003735">
    <property type="term" value="F:structural constituent of ribosome"/>
    <property type="evidence" value="ECO:0007669"/>
    <property type="project" value="InterPro"/>
</dbReference>
<dbReference type="GO" id="GO:0000049">
    <property type="term" value="F:tRNA binding"/>
    <property type="evidence" value="ECO:0007669"/>
    <property type="project" value="UniProtKB-KW"/>
</dbReference>
<dbReference type="GO" id="GO:0006417">
    <property type="term" value="P:regulation of translation"/>
    <property type="evidence" value="ECO:0007669"/>
    <property type="project" value="UniProtKB-KW"/>
</dbReference>
<dbReference type="GO" id="GO:0006412">
    <property type="term" value="P:translation"/>
    <property type="evidence" value="ECO:0007669"/>
    <property type="project" value="UniProtKB-UniRule"/>
</dbReference>
<dbReference type="CDD" id="cd00403">
    <property type="entry name" value="Ribosomal_L1"/>
    <property type="match status" value="1"/>
</dbReference>
<dbReference type="FunFam" id="3.40.50.790:FF:000001">
    <property type="entry name" value="50S ribosomal protein L1"/>
    <property type="match status" value="1"/>
</dbReference>
<dbReference type="Gene3D" id="3.30.190.20">
    <property type="match status" value="1"/>
</dbReference>
<dbReference type="Gene3D" id="3.40.50.790">
    <property type="match status" value="1"/>
</dbReference>
<dbReference type="HAMAP" id="MF_01318_B">
    <property type="entry name" value="Ribosomal_uL1_B"/>
    <property type="match status" value="1"/>
</dbReference>
<dbReference type="InterPro" id="IPR005878">
    <property type="entry name" value="Ribosom_uL1_bac-type"/>
</dbReference>
<dbReference type="InterPro" id="IPR002143">
    <property type="entry name" value="Ribosomal_uL1"/>
</dbReference>
<dbReference type="InterPro" id="IPR023674">
    <property type="entry name" value="Ribosomal_uL1-like"/>
</dbReference>
<dbReference type="InterPro" id="IPR028364">
    <property type="entry name" value="Ribosomal_uL1/biogenesis"/>
</dbReference>
<dbReference type="InterPro" id="IPR016095">
    <property type="entry name" value="Ribosomal_uL1_3-a/b-sand"/>
</dbReference>
<dbReference type="InterPro" id="IPR023673">
    <property type="entry name" value="Ribosomal_uL1_CS"/>
</dbReference>
<dbReference type="NCBIfam" id="TIGR01169">
    <property type="entry name" value="rplA_bact"/>
    <property type="match status" value="1"/>
</dbReference>
<dbReference type="PANTHER" id="PTHR36427">
    <property type="entry name" value="54S RIBOSOMAL PROTEIN L1, MITOCHONDRIAL"/>
    <property type="match status" value="1"/>
</dbReference>
<dbReference type="PANTHER" id="PTHR36427:SF3">
    <property type="entry name" value="LARGE RIBOSOMAL SUBUNIT PROTEIN UL1M"/>
    <property type="match status" value="1"/>
</dbReference>
<dbReference type="Pfam" id="PF00687">
    <property type="entry name" value="Ribosomal_L1"/>
    <property type="match status" value="1"/>
</dbReference>
<dbReference type="PIRSF" id="PIRSF002155">
    <property type="entry name" value="Ribosomal_L1"/>
    <property type="match status" value="1"/>
</dbReference>
<dbReference type="SUPFAM" id="SSF56808">
    <property type="entry name" value="Ribosomal protein L1"/>
    <property type="match status" value="1"/>
</dbReference>
<dbReference type="PROSITE" id="PS01199">
    <property type="entry name" value="RIBOSOMAL_L1"/>
    <property type="match status" value="1"/>
</dbReference>